<organism>
    <name type="scientific">Xylella fastidiosa (strain M12)</name>
    <dbReference type="NCBI Taxonomy" id="405440"/>
    <lineage>
        <taxon>Bacteria</taxon>
        <taxon>Pseudomonadati</taxon>
        <taxon>Pseudomonadota</taxon>
        <taxon>Gammaproteobacteria</taxon>
        <taxon>Lysobacterales</taxon>
        <taxon>Lysobacteraceae</taxon>
        <taxon>Xylella</taxon>
    </lineage>
</organism>
<keyword id="KW-0687">Ribonucleoprotein</keyword>
<keyword id="KW-0689">Ribosomal protein</keyword>
<keyword id="KW-0694">RNA-binding</keyword>
<keyword id="KW-0699">rRNA-binding</keyword>
<sequence>MDLTIVGSDNTLPVSDVVFGREFSEALVHQVVVAYRNTARSGTKAQKSRSQVSGTTKKSKKQKGGGARHGALTAPIFVGGGVAFAAKPRSFSQKVNRKQYRSAICSIFSELNRQGRLKVVDAFDVEVSKTKVFAEKIKSLEVVGVGSSLLIVSDEISECLSLSSRNLPCVDVRSVQALDPVALVGSDVVVLTVGAVKKIEEWLV</sequence>
<evidence type="ECO:0000255" key="1">
    <source>
        <dbReference type="HAMAP-Rule" id="MF_01328"/>
    </source>
</evidence>
<evidence type="ECO:0000256" key="2">
    <source>
        <dbReference type="SAM" id="MobiDB-lite"/>
    </source>
</evidence>
<evidence type="ECO:0000305" key="3"/>
<name>RL4_XYLFM</name>
<dbReference type="EMBL" id="CP000941">
    <property type="protein sequence ID" value="ACA11504.1"/>
    <property type="molecule type" value="Genomic_DNA"/>
</dbReference>
<dbReference type="RefSeq" id="WP_004086522.1">
    <property type="nucleotide sequence ID" value="NC_010513.1"/>
</dbReference>
<dbReference type="SMR" id="B0U5A8"/>
<dbReference type="GeneID" id="93904140"/>
<dbReference type="KEGG" id="xfm:Xfasm12_0495"/>
<dbReference type="HOGENOM" id="CLU_041575_5_2_6"/>
<dbReference type="GO" id="GO:1990904">
    <property type="term" value="C:ribonucleoprotein complex"/>
    <property type="evidence" value="ECO:0007669"/>
    <property type="project" value="UniProtKB-KW"/>
</dbReference>
<dbReference type="GO" id="GO:0005840">
    <property type="term" value="C:ribosome"/>
    <property type="evidence" value="ECO:0007669"/>
    <property type="project" value="UniProtKB-KW"/>
</dbReference>
<dbReference type="GO" id="GO:0019843">
    <property type="term" value="F:rRNA binding"/>
    <property type="evidence" value="ECO:0007669"/>
    <property type="project" value="UniProtKB-UniRule"/>
</dbReference>
<dbReference type="GO" id="GO:0003735">
    <property type="term" value="F:structural constituent of ribosome"/>
    <property type="evidence" value="ECO:0007669"/>
    <property type="project" value="InterPro"/>
</dbReference>
<dbReference type="GO" id="GO:0006412">
    <property type="term" value="P:translation"/>
    <property type="evidence" value="ECO:0007669"/>
    <property type="project" value="UniProtKB-UniRule"/>
</dbReference>
<dbReference type="Gene3D" id="3.40.1370.10">
    <property type="match status" value="1"/>
</dbReference>
<dbReference type="HAMAP" id="MF_01328_B">
    <property type="entry name" value="Ribosomal_uL4_B"/>
    <property type="match status" value="1"/>
</dbReference>
<dbReference type="InterPro" id="IPR002136">
    <property type="entry name" value="Ribosomal_uL4"/>
</dbReference>
<dbReference type="InterPro" id="IPR013005">
    <property type="entry name" value="Ribosomal_uL4-like"/>
</dbReference>
<dbReference type="InterPro" id="IPR023574">
    <property type="entry name" value="Ribosomal_uL4_dom_sf"/>
</dbReference>
<dbReference type="NCBIfam" id="TIGR03953">
    <property type="entry name" value="rplD_bact"/>
    <property type="match status" value="1"/>
</dbReference>
<dbReference type="PANTHER" id="PTHR10746">
    <property type="entry name" value="50S RIBOSOMAL PROTEIN L4"/>
    <property type="match status" value="1"/>
</dbReference>
<dbReference type="PANTHER" id="PTHR10746:SF6">
    <property type="entry name" value="LARGE RIBOSOMAL SUBUNIT PROTEIN UL4M"/>
    <property type="match status" value="1"/>
</dbReference>
<dbReference type="Pfam" id="PF00573">
    <property type="entry name" value="Ribosomal_L4"/>
    <property type="match status" value="1"/>
</dbReference>
<dbReference type="SUPFAM" id="SSF52166">
    <property type="entry name" value="Ribosomal protein L4"/>
    <property type="match status" value="1"/>
</dbReference>
<comment type="function">
    <text evidence="1">One of the primary rRNA binding proteins, this protein initially binds near the 5'-end of the 23S rRNA. It is important during the early stages of 50S assembly. It makes multiple contacts with different domains of the 23S rRNA in the assembled 50S subunit and ribosome.</text>
</comment>
<comment type="function">
    <text evidence="1">Forms part of the polypeptide exit tunnel.</text>
</comment>
<comment type="subunit">
    <text evidence="1">Part of the 50S ribosomal subunit.</text>
</comment>
<comment type="similarity">
    <text evidence="1">Belongs to the universal ribosomal protein uL4 family.</text>
</comment>
<accession>B0U5A8</accession>
<proteinExistence type="inferred from homology"/>
<protein>
    <recommendedName>
        <fullName evidence="1">Large ribosomal subunit protein uL4</fullName>
    </recommendedName>
    <alternativeName>
        <fullName evidence="3">50S ribosomal protein L4</fullName>
    </alternativeName>
</protein>
<gene>
    <name evidence="1" type="primary">rplD</name>
    <name type="ordered locus">Xfasm12_0495</name>
</gene>
<feature type="chain" id="PRO_1000142210" description="Large ribosomal subunit protein uL4">
    <location>
        <begin position="1"/>
        <end position="204"/>
    </location>
</feature>
<feature type="region of interest" description="Disordered" evidence="2">
    <location>
        <begin position="42"/>
        <end position="70"/>
    </location>
</feature>
<feature type="compositionally biased region" description="Polar residues" evidence="2">
    <location>
        <begin position="42"/>
        <end position="52"/>
    </location>
</feature>
<reference key="1">
    <citation type="journal article" date="2010" name="J. Bacteriol.">
        <title>Whole genome sequences of two Xylella fastidiosa strains (M12 and M23) causing almond leaf scorch disease in California.</title>
        <authorList>
            <person name="Chen J."/>
            <person name="Xie G."/>
            <person name="Han S."/>
            <person name="Chertkov O."/>
            <person name="Sims D."/>
            <person name="Civerolo E.L."/>
        </authorList>
    </citation>
    <scope>NUCLEOTIDE SEQUENCE [LARGE SCALE GENOMIC DNA]</scope>
    <source>
        <strain>M12</strain>
    </source>
</reference>